<name>YIDC1_BACAN</name>
<comment type="function">
    <text evidence="1">Required for the insertion and/or proper folding and/or complex formation of integral membrane proteins into the membrane. Involved in integration of membrane proteins that insert both dependently and independently of the Sec translocase complex, as well as at least some lipoproteins.</text>
</comment>
<comment type="subcellular location">
    <subcellularLocation>
        <location evidence="1">Cell membrane</location>
        <topology evidence="1">Multi-pass membrane protein</topology>
    </subcellularLocation>
</comment>
<comment type="similarity">
    <text evidence="1">Belongs to the OXA1/ALB3/YidC family. Type 2 subfamily.</text>
</comment>
<feature type="signal peptide" evidence="1">
    <location>
        <begin position="1"/>
        <end position="22"/>
    </location>
</feature>
<feature type="chain" id="PRO_0000020372" description="Membrane protein insertase YidC 1">
    <location>
        <begin position="23"/>
        <end position="260"/>
    </location>
</feature>
<feature type="transmembrane region" description="Helical" evidence="1">
    <location>
        <begin position="29"/>
        <end position="49"/>
    </location>
</feature>
<feature type="transmembrane region" description="Helical" evidence="1">
    <location>
        <begin position="52"/>
        <end position="72"/>
    </location>
</feature>
<feature type="transmembrane region" description="Helical" evidence="1">
    <location>
        <begin position="133"/>
        <end position="153"/>
    </location>
</feature>
<feature type="transmembrane region" description="Helical" evidence="1">
    <location>
        <begin position="164"/>
        <end position="184"/>
    </location>
</feature>
<feature type="transmembrane region" description="Helical" evidence="1">
    <location>
        <begin position="213"/>
        <end position="233"/>
    </location>
</feature>
<feature type="lipid moiety-binding region" description="N-palmitoyl cysteine" evidence="1">
    <location>
        <position position="23"/>
    </location>
</feature>
<feature type="lipid moiety-binding region" description="S-diacylglycerol cysteine" evidence="1">
    <location>
        <position position="23"/>
    </location>
</feature>
<reference key="1">
    <citation type="journal article" date="2003" name="Nature">
        <title>The genome sequence of Bacillus anthracis Ames and comparison to closely related bacteria.</title>
        <authorList>
            <person name="Read T.D."/>
            <person name="Peterson S.N."/>
            <person name="Tourasse N.J."/>
            <person name="Baillie L.W."/>
            <person name="Paulsen I.T."/>
            <person name="Nelson K.E."/>
            <person name="Tettelin H."/>
            <person name="Fouts D.E."/>
            <person name="Eisen J.A."/>
            <person name="Gill S.R."/>
            <person name="Holtzapple E.K."/>
            <person name="Okstad O.A."/>
            <person name="Helgason E."/>
            <person name="Rilstone J."/>
            <person name="Wu M."/>
            <person name="Kolonay J.F."/>
            <person name="Beanan M.J."/>
            <person name="Dodson R.J."/>
            <person name="Brinkac L.M."/>
            <person name="Gwinn M.L."/>
            <person name="DeBoy R.T."/>
            <person name="Madpu R."/>
            <person name="Daugherty S.C."/>
            <person name="Durkin A.S."/>
            <person name="Haft D.H."/>
            <person name="Nelson W.C."/>
            <person name="Peterson J.D."/>
            <person name="Pop M."/>
            <person name="Khouri H.M."/>
            <person name="Radune D."/>
            <person name="Benton J.L."/>
            <person name="Mahamoud Y."/>
            <person name="Jiang L."/>
            <person name="Hance I.R."/>
            <person name="Weidman J.F."/>
            <person name="Berry K.J."/>
            <person name="Plaut R.D."/>
            <person name="Wolf A.M."/>
            <person name="Watkins K.L."/>
            <person name="Nierman W.C."/>
            <person name="Hazen A."/>
            <person name="Cline R.T."/>
            <person name="Redmond C."/>
            <person name="Thwaite J.E."/>
            <person name="White O."/>
            <person name="Salzberg S.L."/>
            <person name="Thomason B."/>
            <person name="Friedlander A.M."/>
            <person name="Koehler T.M."/>
            <person name="Hanna P.C."/>
            <person name="Kolstoe A.-B."/>
            <person name="Fraser C.M."/>
        </authorList>
    </citation>
    <scope>NUCLEOTIDE SEQUENCE [LARGE SCALE GENOMIC DNA]</scope>
    <source>
        <strain>Ames / isolate Porton</strain>
    </source>
</reference>
<reference key="2">
    <citation type="journal article" date="2009" name="J. Bacteriol.">
        <title>The complete genome sequence of Bacillus anthracis Ames 'Ancestor'.</title>
        <authorList>
            <person name="Ravel J."/>
            <person name="Jiang L."/>
            <person name="Stanley S.T."/>
            <person name="Wilson M.R."/>
            <person name="Decker R.S."/>
            <person name="Read T.D."/>
            <person name="Worsham P."/>
            <person name="Keim P.S."/>
            <person name="Salzberg S.L."/>
            <person name="Fraser-Liggett C.M."/>
            <person name="Rasko D.A."/>
        </authorList>
    </citation>
    <scope>NUCLEOTIDE SEQUENCE [LARGE SCALE GENOMIC DNA]</scope>
    <source>
        <strain>Ames ancestor</strain>
    </source>
</reference>
<reference key="3">
    <citation type="submission" date="2004-01" db="EMBL/GenBank/DDBJ databases">
        <title>Complete genome sequence of Bacillus anthracis Sterne.</title>
        <authorList>
            <person name="Brettin T.S."/>
            <person name="Bruce D."/>
            <person name="Challacombe J.F."/>
            <person name="Gilna P."/>
            <person name="Han C."/>
            <person name="Hill K."/>
            <person name="Hitchcock P."/>
            <person name="Jackson P."/>
            <person name="Keim P."/>
            <person name="Longmire J."/>
            <person name="Lucas S."/>
            <person name="Okinaka R."/>
            <person name="Richardson P."/>
            <person name="Rubin E."/>
            <person name="Tice H."/>
        </authorList>
    </citation>
    <scope>NUCLEOTIDE SEQUENCE [LARGE SCALE GENOMIC DNA]</scope>
    <source>
        <strain>Sterne</strain>
    </source>
</reference>
<organism>
    <name type="scientific">Bacillus anthracis</name>
    <dbReference type="NCBI Taxonomy" id="1392"/>
    <lineage>
        <taxon>Bacteria</taxon>
        <taxon>Bacillati</taxon>
        <taxon>Bacillota</taxon>
        <taxon>Bacilli</taxon>
        <taxon>Bacillales</taxon>
        <taxon>Bacillaceae</taxon>
        <taxon>Bacillus</taxon>
        <taxon>Bacillus cereus group</taxon>
    </lineage>
</organism>
<keyword id="KW-1003">Cell membrane</keyword>
<keyword id="KW-0143">Chaperone</keyword>
<keyword id="KW-0449">Lipoprotein</keyword>
<keyword id="KW-0472">Membrane</keyword>
<keyword id="KW-0564">Palmitate</keyword>
<keyword id="KW-0653">Protein transport</keyword>
<keyword id="KW-1185">Reference proteome</keyword>
<keyword id="KW-0732">Signal</keyword>
<keyword id="KW-0812">Transmembrane</keyword>
<keyword id="KW-1133">Transmembrane helix</keyword>
<keyword id="KW-0813">Transport</keyword>
<evidence type="ECO:0000255" key="1">
    <source>
        <dbReference type="HAMAP-Rule" id="MF_01811"/>
    </source>
</evidence>
<proteinExistence type="inferred from homology"/>
<accession>Q81XH4</accession>
<accession>Q6HRA8</accession>
<accession>Q6KKM4</accession>
<protein>
    <recommendedName>
        <fullName evidence="1">Membrane protein insertase YidC 1</fullName>
    </recommendedName>
    <alternativeName>
        <fullName evidence="1">Foldase YidC 1</fullName>
    </alternativeName>
    <alternativeName>
        <fullName evidence="1">Membrane integrase YidC 1</fullName>
    </alternativeName>
    <alternativeName>
        <fullName evidence="1">Membrane protein YidC 1</fullName>
    </alternativeName>
</protein>
<dbReference type="EMBL" id="AE016879">
    <property type="protein sequence ID" value="AAP28928.1"/>
    <property type="molecule type" value="Genomic_DNA"/>
</dbReference>
<dbReference type="EMBL" id="AE017334">
    <property type="protein sequence ID" value="AAT34395.1"/>
    <property type="molecule type" value="Genomic_DNA"/>
</dbReference>
<dbReference type="EMBL" id="AE017225">
    <property type="protein sequence ID" value="AAT57180.1"/>
    <property type="molecule type" value="Genomic_DNA"/>
</dbReference>
<dbReference type="RefSeq" id="NP_847442.1">
    <property type="nucleotide sequence ID" value="NC_003997.3"/>
</dbReference>
<dbReference type="RefSeq" id="YP_031130.1">
    <property type="nucleotide sequence ID" value="NC_005945.1"/>
</dbReference>
<dbReference type="SMR" id="Q81XH4"/>
<dbReference type="IntAct" id="Q81XH4">
    <property type="interactions" value="1"/>
</dbReference>
<dbReference type="STRING" id="261594.GBAA_5263"/>
<dbReference type="DNASU" id="1084727"/>
<dbReference type="GeneID" id="45024877"/>
<dbReference type="KEGG" id="ban:BA_5263"/>
<dbReference type="KEGG" id="bar:GBAA_5263"/>
<dbReference type="KEGG" id="bat:BAS4889"/>
<dbReference type="PATRIC" id="fig|198094.11.peg.5225"/>
<dbReference type="eggNOG" id="COG0706">
    <property type="taxonomic scope" value="Bacteria"/>
</dbReference>
<dbReference type="HOGENOM" id="CLU_036138_5_0_9"/>
<dbReference type="OMA" id="IMPVMIF"/>
<dbReference type="OrthoDB" id="9780552at2"/>
<dbReference type="Proteomes" id="UP000000427">
    <property type="component" value="Chromosome"/>
</dbReference>
<dbReference type="Proteomes" id="UP000000594">
    <property type="component" value="Chromosome"/>
</dbReference>
<dbReference type="GO" id="GO:0005886">
    <property type="term" value="C:plasma membrane"/>
    <property type="evidence" value="ECO:0007669"/>
    <property type="project" value="UniProtKB-SubCell"/>
</dbReference>
<dbReference type="GO" id="GO:0032977">
    <property type="term" value="F:membrane insertase activity"/>
    <property type="evidence" value="ECO:0007669"/>
    <property type="project" value="InterPro"/>
</dbReference>
<dbReference type="GO" id="GO:0051205">
    <property type="term" value="P:protein insertion into membrane"/>
    <property type="evidence" value="ECO:0007669"/>
    <property type="project" value="TreeGrafter"/>
</dbReference>
<dbReference type="GO" id="GO:0015031">
    <property type="term" value="P:protein transport"/>
    <property type="evidence" value="ECO:0007669"/>
    <property type="project" value="UniProtKB-KW"/>
</dbReference>
<dbReference type="CDD" id="cd20070">
    <property type="entry name" value="5TM_YidC_Alb3"/>
    <property type="match status" value="1"/>
</dbReference>
<dbReference type="HAMAP" id="MF_01811">
    <property type="entry name" value="YidC_type2"/>
    <property type="match status" value="1"/>
</dbReference>
<dbReference type="InterPro" id="IPR001708">
    <property type="entry name" value="YidC/ALB3/OXA1/COX18"/>
</dbReference>
<dbReference type="InterPro" id="IPR028055">
    <property type="entry name" value="YidC/Oxa/ALB_C"/>
</dbReference>
<dbReference type="InterPro" id="IPR023060">
    <property type="entry name" value="YidC/YidC1/YidC2_Firmicutes"/>
</dbReference>
<dbReference type="InterPro" id="IPR047196">
    <property type="entry name" value="YidC_ALB_C"/>
</dbReference>
<dbReference type="NCBIfam" id="TIGR03592">
    <property type="entry name" value="yidC_oxa1_cterm"/>
    <property type="match status" value="1"/>
</dbReference>
<dbReference type="PANTHER" id="PTHR12428:SF65">
    <property type="entry name" value="CYTOCHROME C OXIDASE ASSEMBLY PROTEIN COX18, MITOCHONDRIAL"/>
    <property type="match status" value="1"/>
</dbReference>
<dbReference type="PANTHER" id="PTHR12428">
    <property type="entry name" value="OXA1"/>
    <property type="match status" value="1"/>
</dbReference>
<dbReference type="Pfam" id="PF02096">
    <property type="entry name" value="60KD_IMP"/>
    <property type="match status" value="1"/>
</dbReference>
<dbReference type="PRINTS" id="PR00701">
    <property type="entry name" value="60KDINNERMP"/>
</dbReference>
<dbReference type="PROSITE" id="PS51257">
    <property type="entry name" value="PROKAR_LIPOPROTEIN"/>
    <property type="match status" value="1"/>
</dbReference>
<sequence>MLKSYRAVLVSLSLLLVFVLSGCSNATPIDAHSTGIWDHYFVYPISFMIQFVAHHIPGASFGIAIIIMTLVIRSAMIPLAVSQYRSQAKMKKMQPELQKLKQKYGDVSKDLEKQKQYQKEMSELMKSGGWNPLAGCWPLLIQMPIFSALYYAISRTEEIRTSTFLWVNLGHADPYHILPIIAALTTFIQMKVFQSNSTSGEQVQMLKMQQIMMPAMILFMGFAAPSGLVLYWITGNLFTMMQTIVLRKIMEREELQLQKA</sequence>
<gene>
    <name evidence="1" type="primary">yidC1</name>
    <name type="synonym">spoIIIJ-1</name>
    <name type="ordered locus">BA_5263</name>
    <name type="ordered locus">GBAA_5263</name>
    <name type="ordered locus">BAS4889</name>
</gene>